<organism>
    <name type="scientific">Yersinia pestis</name>
    <dbReference type="NCBI Taxonomy" id="632"/>
    <lineage>
        <taxon>Bacteria</taxon>
        <taxon>Pseudomonadati</taxon>
        <taxon>Pseudomonadota</taxon>
        <taxon>Gammaproteobacteria</taxon>
        <taxon>Enterobacterales</taxon>
        <taxon>Yersiniaceae</taxon>
        <taxon>Yersinia</taxon>
    </lineage>
</organism>
<gene>
    <name evidence="1" type="primary">argS</name>
    <name type="ordered locus">YPO2046</name>
    <name type="ordered locus">y2266</name>
    <name type="ordered locus">YP_1889</name>
</gene>
<reference key="1">
    <citation type="journal article" date="2001" name="Nature">
        <title>Genome sequence of Yersinia pestis, the causative agent of plague.</title>
        <authorList>
            <person name="Parkhill J."/>
            <person name="Wren B.W."/>
            <person name="Thomson N.R."/>
            <person name="Titball R.W."/>
            <person name="Holden M.T.G."/>
            <person name="Prentice M.B."/>
            <person name="Sebaihia M."/>
            <person name="James K.D."/>
            <person name="Churcher C.M."/>
            <person name="Mungall K.L."/>
            <person name="Baker S."/>
            <person name="Basham D."/>
            <person name="Bentley S.D."/>
            <person name="Brooks K."/>
            <person name="Cerdeno-Tarraga A.-M."/>
            <person name="Chillingworth T."/>
            <person name="Cronin A."/>
            <person name="Davies R.M."/>
            <person name="Davis P."/>
            <person name="Dougan G."/>
            <person name="Feltwell T."/>
            <person name="Hamlin N."/>
            <person name="Holroyd S."/>
            <person name="Jagels K."/>
            <person name="Karlyshev A.V."/>
            <person name="Leather S."/>
            <person name="Moule S."/>
            <person name="Oyston P.C.F."/>
            <person name="Quail M.A."/>
            <person name="Rutherford K.M."/>
            <person name="Simmonds M."/>
            <person name="Skelton J."/>
            <person name="Stevens K."/>
            <person name="Whitehead S."/>
            <person name="Barrell B.G."/>
        </authorList>
    </citation>
    <scope>NUCLEOTIDE SEQUENCE [LARGE SCALE GENOMIC DNA]</scope>
    <source>
        <strain>CO-92 / Biovar Orientalis</strain>
    </source>
</reference>
<reference key="2">
    <citation type="journal article" date="2002" name="J. Bacteriol.">
        <title>Genome sequence of Yersinia pestis KIM.</title>
        <authorList>
            <person name="Deng W."/>
            <person name="Burland V."/>
            <person name="Plunkett G. III"/>
            <person name="Boutin A."/>
            <person name="Mayhew G.F."/>
            <person name="Liss P."/>
            <person name="Perna N.T."/>
            <person name="Rose D.J."/>
            <person name="Mau B."/>
            <person name="Zhou S."/>
            <person name="Schwartz D.C."/>
            <person name="Fetherston J.D."/>
            <person name="Lindler L.E."/>
            <person name="Brubaker R.R."/>
            <person name="Plano G.V."/>
            <person name="Straley S.C."/>
            <person name="McDonough K.A."/>
            <person name="Nilles M.L."/>
            <person name="Matson J.S."/>
            <person name="Blattner F.R."/>
            <person name="Perry R.D."/>
        </authorList>
    </citation>
    <scope>NUCLEOTIDE SEQUENCE [LARGE SCALE GENOMIC DNA]</scope>
    <source>
        <strain>KIM10+ / Biovar Mediaevalis</strain>
    </source>
</reference>
<reference key="3">
    <citation type="journal article" date="2004" name="DNA Res.">
        <title>Complete genome sequence of Yersinia pestis strain 91001, an isolate avirulent to humans.</title>
        <authorList>
            <person name="Song Y."/>
            <person name="Tong Z."/>
            <person name="Wang J."/>
            <person name="Wang L."/>
            <person name="Guo Z."/>
            <person name="Han Y."/>
            <person name="Zhang J."/>
            <person name="Pei D."/>
            <person name="Zhou D."/>
            <person name="Qin H."/>
            <person name="Pang X."/>
            <person name="Han Y."/>
            <person name="Zhai J."/>
            <person name="Li M."/>
            <person name="Cui B."/>
            <person name="Qi Z."/>
            <person name="Jin L."/>
            <person name="Dai R."/>
            <person name="Chen F."/>
            <person name="Li S."/>
            <person name="Ye C."/>
            <person name="Du Z."/>
            <person name="Lin W."/>
            <person name="Wang J."/>
            <person name="Yu J."/>
            <person name="Yang H."/>
            <person name="Wang J."/>
            <person name="Huang P."/>
            <person name="Yang R."/>
        </authorList>
    </citation>
    <scope>NUCLEOTIDE SEQUENCE [LARGE SCALE GENOMIC DNA]</scope>
    <source>
        <strain>91001 / Biovar Mediaevalis</strain>
    </source>
</reference>
<accession>Q8ZEV7</accession>
<accession>Q0WFB0</accession>
<name>SYR_YERPE</name>
<protein>
    <recommendedName>
        <fullName evidence="1">Arginine--tRNA ligase</fullName>
        <ecNumber evidence="1">6.1.1.19</ecNumber>
    </recommendedName>
    <alternativeName>
        <fullName evidence="1">Arginyl-tRNA synthetase</fullName>
        <shortName evidence="1">ArgRS</shortName>
    </alternativeName>
</protein>
<feature type="chain" id="PRO_0000151641" description="Arginine--tRNA ligase">
    <location>
        <begin position="1"/>
        <end position="576"/>
    </location>
</feature>
<feature type="short sequence motif" description="'HIGH' region">
    <location>
        <begin position="124"/>
        <end position="132"/>
    </location>
</feature>
<comment type="catalytic activity">
    <reaction evidence="1">
        <text>tRNA(Arg) + L-arginine + ATP = L-arginyl-tRNA(Arg) + AMP + diphosphate</text>
        <dbReference type="Rhea" id="RHEA:20301"/>
        <dbReference type="Rhea" id="RHEA-COMP:9658"/>
        <dbReference type="Rhea" id="RHEA-COMP:9673"/>
        <dbReference type="ChEBI" id="CHEBI:30616"/>
        <dbReference type="ChEBI" id="CHEBI:32682"/>
        <dbReference type="ChEBI" id="CHEBI:33019"/>
        <dbReference type="ChEBI" id="CHEBI:78442"/>
        <dbReference type="ChEBI" id="CHEBI:78513"/>
        <dbReference type="ChEBI" id="CHEBI:456215"/>
        <dbReference type="EC" id="6.1.1.19"/>
    </reaction>
</comment>
<comment type="subunit">
    <text evidence="1">Monomer.</text>
</comment>
<comment type="subcellular location">
    <subcellularLocation>
        <location evidence="1">Cytoplasm</location>
    </subcellularLocation>
</comment>
<comment type="similarity">
    <text evidence="1">Belongs to the class-I aminoacyl-tRNA synthetase family.</text>
</comment>
<proteinExistence type="inferred from homology"/>
<dbReference type="EC" id="6.1.1.19" evidence="1"/>
<dbReference type="EMBL" id="AL590842">
    <property type="protein sequence ID" value="CAL20681.1"/>
    <property type="molecule type" value="Genomic_DNA"/>
</dbReference>
<dbReference type="EMBL" id="AE009952">
    <property type="protein sequence ID" value="AAM85826.1"/>
    <property type="molecule type" value="Genomic_DNA"/>
</dbReference>
<dbReference type="EMBL" id="AE017042">
    <property type="protein sequence ID" value="AAS62107.1"/>
    <property type="molecule type" value="Genomic_DNA"/>
</dbReference>
<dbReference type="PIR" id="AF0249">
    <property type="entry name" value="AF0249"/>
</dbReference>
<dbReference type="RefSeq" id="WP_002211212.1">
    <property type="nucleotide sequence ID" value="NZ_WUCM01000075.1"/>
</dbReference>
<dbReference type="RefSeq" id="YP_002347028.1">
    <property type="nucleotide sequence ID" value="NC_003143.1"/>
</dbReference>
<dbReference type="SMR" id="Q8ZEV7"/>
<dbReference type="IntAct" id="Q8ZEV7">
    <property type="interactions" value="4"/>
</dbReference>
<dbReference type="STRING" id="214092.YPO2046"/>
<dbReference type="PaxDb" id="214092-YPO2046"/>
<dbReference type="DNASU" id="1147213"/>
<dbReference type="EnsemblBacteria" id="AAS62107">
    <property type="protein sequence ID" value="AAS62107"/>
    <property type="gene ID" value="YP_1889"/>
</dbReference>
<dbReference type="GeneID" id="57976615"/>
<dbReference type="KEGG" id="ype:YPO2046"/>
<dbReference type="KEGG" id="ypk:y2266"/>
<dbReference type="KEGG" id="ypl:CH46_3065"/>
<dbReference type="KEGG" id="ypm:YP_1889"/>
<dbReference type="KEGG" id="ypv:BZ15_1491"/>
<dbReference type="KEGG" id="ypw:CH59_4077"/>
<dbReference type="PATRIC" id="fig|1028802.3.peg.1852"/>
<dbReference type="eggNOG" id="COG0018">
    <property type="taxonomic scope" value="Bacteria"/>
</dbReference>
<dbReference type="HOGENOM" id="CLU_006406_5_1_6"/>
<dbReference type="OMA" id="NKPLHLG"/>
<dbReference type="OrthoDB" id="9803211at2"/>
<dbReference type="Proteomes" id="UP000000815">
    <property type="component" value="Chromosome"/>
</dbReference>
<dbReference type="Proteomes" id="UP000001019">
    <property type="component" value="Chromosome"/>
</dbReference>
<dbReference type="Proteomes" id="UP000002490">
    <property type="component" value="Chromosome"/>
</dbReference>
<dbReference type="GO" id="GO:0005737">
    <property type="term" value="C:cytoplasm"/>
    <property type="evidence" value="ECO:0007669"/>
    <property type="project" value="UniProtKB-SubCell"/>
</dbReference>
<dbReference type="GO" id="GO:0004814">
    <property type="term" value="F:arginine-tRNA ligase activity"/>
    <property type="evidence" value="ECO:0000318"/>
    <property type="project" value="GO_Central"/>
</dbReference>
<dbReference type="GO" id="GO:0005524">
    <property type="term" value="F:ATP binding"/>
    <property type="evidence" value="ECO:0007669"/>
    <property type="project" value="UniProtKB-UniRule"/>
</dbReference>
<dbReference type="GO" id="GO:0006420">
    <property type="term" value="P:arginyl-tRNA aminoacylation"/>
    <property type="evidence" value="ECO:0000318"/>
    <property type="project" value="GO_Central"/>
</dbReference>
<dbReference type="CDD" id="cd07956">
    <property type="entry name" value="Anticodon_Ia_Arg"/>
    <property type="match status" value="1"/>
</dbReference>
<dbReference type="CDD" id="cd00671">
    <property type="entry name" value="ArgRS_core"/>
    <property type="match status" value="1"/>
</dbReference>
<dbReference type="FunFam" id="1.10.730.10:FF:000001">
    <property type="entry name" value="Arginine--tRNA ligase"/>
    <property type="match status" value="1"/>
</dbReference>
<dbReference type="FunFam" id="3.30.1360.70:FF:000001">
    <property type="entry name" value="Arginine--tRNA ligase"/>
    <property type="match status" value="1"/>
</dbReference>
<dbReference type="FunFam" id="3.40.50.620:FF:000030">
    <property type="entry name" value="Arginine--tRNA ligase"/>
    <property type="match status" value="1"/>
</dbReference>
<dbReference type="Gene3D" id="3.30.1360.70">
    <property type="entry name" value="Arginyl tRNA synthetase N-terminal domain"/>
    <property type="match status" value="1"/>
</dbReference>
<dbReference type="Gene3D" id="3.40.50.620">
    <property type="entry name" value="HUPs"/>
    <property type="match status" value="1"/>
</dbReference>
<dbReference type="Gene3D" id="1.10.730.10">
    <property type="entry name" value="Isoleucyl-tRNA Synthetase, Domain 1"/>
    <property type="match status" value="1"/>
</dbReference>
<dbReference type="HAMAP" id="MF_00123">
    <property type="entry name" value="Arg_tRNA_synth"/>
    <property type="match status" value="1"/>
</dbReference>
<dbReference type="InterPro" id="IPR001412">
    <property type="entry name" value="aa-tRNA-synth_I_CS"/>
</dbReference>
<dbReference type="InterPro" id="IPR001278">
    <property type="entry name" value="Arg-tRNA-ligase"/>
</dbReference>
<dbReference type="InterPro" id="IPR005148">
    <property type="entry name" value="Arg-tRNA-synth_N"/>
</dbReference>
<dbReference type="InterPro" id="IPR036695">
    <property type="entry name" value="Arg-tRNA-synth_N_sf"/>
</dbReference>
<dbReference type="InterPro" id="IPR035684">
    <property type="entry name" value="ArgRS_core"/>
</dbReference>
<dbReference type="InterPro" id="IPR008909">
    <property type="entry name" value="DALR_anticod-bd"/>
</dbReference>
<dbReference type="InterPro" id="IPR014729">
    <property type="entry name" value="Rossmann-like_a/b/a_fold"/>
</dbReference>
<dbReference type="InterPro" id="IPR009080">
    <property type="entry name" value="tRNAsynth_Ia_anticodon-bd"/>
</dbReference>
<dbReference type="NCBIfam" id="TIGR00456">
    <property type="entry name" value="argS"/>
    <property type="match status" value="1"/>
</dbReference>
<dbReference type="PANTHER" id="PTHR11956:SF5">
    <property type="entry name" value="ARGININE--TRNA LIGASE, CYTOPLASMIC"/>
    <property type="match status" value="1"/>
</dbReference>
<dbReference type="PANTHER" id="PTHR11956">
    <property type="entry name" value="ARGINYL-TRNA SYNTHETASE"/>
    <property type="match status" value="1"/>
</dbReference>
<dbReference type="Pfam" id="PF03485">
    <property type="entry name" value="Arg_tRNA_synt_N"/>
    <property type="match status" value="1"/>
</dbReference>
<dbReference type="Pfam" id="PF05746">
    <property type="entry name" value="DALR_1"/>
    <property type="match status" value="1"/>
</dbReference>
<dbReference type="Pfam" id="PF00750">
    <property type="entry name" value="tRNA-synt_1d"/>
    <property type="match status" value="1"/>
</dbReference>
<dbReference type="PRINTS" id="PR01038">
    <property type="entry name" value="TRNASYNTHARG"/>
</dbReference>
<dbReference type="SMART" id="SM01016">
    <property type="entry name" value="Arg_tRNA_synt_N"/>
    <property type="match status" value="1"/>
</dbReference>
<dbReference type="SMART" id="SM00836">
    <property type="entry name" value="DALR_1"/>
    <property type="match status" value="1"/>
</dbReference>
<dbReference type="SUPFAM" id="SSF47323">
    <property type="entry name" value="Anticodon-binding domain of a subclass of class I aminoacyl-tRNA synthetases"/>
    <property type="match status" value="1"/>
</dbReference>
<dbReference type="SUPFAM" id="SSF55190">
    <property type="entry name" value="Arginyl-tRNA synthetase (ArgRS), N-terminal 'additional' domain"/>
    <property type="match status" value="1"/>
</dbReference>
<dbReference type="SUPFAM" id="SSF52374">
    <property type="entry name" value="Nucleotidylyl transferase"/>
    <property type="match status" value="1"/>
</dbReference>
<dbReference type="PROSITE" id="PS00178">
    <property type="entry name" value="AA_TRNA_LIGASE_I"/>
    <property type="match status" value="1"/>
</dbReference>
<keyword id="KW-0030">Aminoacyl-tRNA synthetase</keyword>
<keyword id="KW-0067">ATP-binding</keyword>
<keyword id="KW-0963">Cytoplasm</keyword>
<keyword id="KW-0436">Ligase</keyword>
<keyword id="KW-0547">Nucleotide-binding</keyword>
<keyword id="KW-0648">Protein biosynthesis</keyword>
<keyword id="KW-1185">Reference proteome</keyword>
<evidence type="ECO:0000255" key="1">
    <source>
        <dbReference type="HAMAP-Rule" id="MF_00123"/>
    </source>
</evidence>
<sequence>MNIQALLSDKVSQALIAAGAPADCEAQVRQSAKAQFGDYQANGVMAVAKKLGMQPRQLAERVVELLDLTGIASKIEIAGPGFINIFLDRQWVAEKVEYALTAPKLGVAPVEPQTIVVDYSAPNVAKQMHVGHLRSTIIGDAAVRTLAFLGHNVIRANHVGDWGTQFGMLIAYLEKMQNENASDMGLSDLELFYQQAKKTYDEDEEFALRARAYVVKLQSGDEYCRQMWRKLVDITMAQNQVAYDRLNVTLTKDDVMGESLYNAMLPEIVADLKAKGLAVESEGATVVYLDEYKNKDGEPMGVIIQKKDGGYLYTTTDIACAKYRYETLGADRILYYIDSRQHQHLMQAWTIVRKAGYVPESVPLEHHMFGMMLGKDGKPFKTRSGGTVKLSDLLDEAVERAGKLIAEKNPDMPADELKQVINAVGIGAVKYADLSKSRTTDYIFDWDNMLALDGNTAPYMQYAYTRVVSVFRRAGVDETSLTLPLVVTEDREATLATRLLQFEEIITTVAREGTPHVMCSYLYDLAGLFSSFYEHCQILNAESEEIRQSRLKLAMLTAKTLKQGLDTLGIQTVERM</sequence>